<sequence>MSFPQLGYQYIRPLYPSERPGAAGGSGGSAGARGGLGAGASELNASGSLSNVLSSVYGAPYAAAAAAAAAQGYGAFLPYAAELPIFPQLGAQYELKDSPGVQHPAAAAAFPHPHPAFYPYGQYQFGDPSRPKNATRESTSTLKAWLNEHRKNPYPTKGEKIMLAIITKMTLTQVSTWFANARRRLKKENKMTWAPRSRTDEEGNAYGSEREEEDEEEDEEDGKRELELEEEELGGEEEDTGGEGLADDDEDEEIDLENLDGAATEPELSLAGAARRDGDLGLGPISDSKNSDSEDSSEGLEDRPLPVLSLAPAPPPVAVASPSLPSPPVSLDPCAPAPAPASALQKPKIWSLAETATSPDNPRRSPPGAGGSPPGAAVAPSALQLSPAAAAAAAHRLVSAPLGKFPAWTNRPFPGPPPGPRLHPLSLLGSAPPHLLGLPGAAGHPAAAAAFARPAEPEGGTDRCSALEVEKKLLKTAFQPVPRRPQNHLDAALVLSALSSS</sequence>
<feature type="chain" id="PRO_0000049155" description="Iroquois-class homeodomain protein IRX-3">
    <location>
        <begin position="1"/>
        <end position="501"/>
    </location>
</feature>
<feature type="DNA-binding region" description="Homeobox; TALE-type" evidence="2">
    <location>
        <begin position="125"/>
        <end position="188"/>
    </location>
</feature>
<feature type="region of interest" description="Disordered" evidence="3">
    <location>
        <begin position="190"/>
        <end position="381"/>
    </location>
</feature>
<feature type="compositionally biased region" description="Acidic residues" evidence="3">
    <location>
        <begin position="210"/>
        <end position="220"/>
    </location>
</feature>
<feature type="compositionally biased region" description="Acidic residues" evidence="3">
    <location>
        <begin position="227"/>
        <end position="258"/>
    </location>
</feature>
<feature type="compositionally biased region" description="Pro residues" evidence="3">
    <location>
        <begin position="324"/>
        <end position="339"/>
    </location>
</feature>
<feature type="modified residue" description="Phosphoserine" evidence="1">
    <location>
        <position position="323"/>
    </location>
</feature>
<feature type="modified residue" description="Phosphoserine" evidence="1">
    <location>
        <position position="326"/>
    </location>
</feature>
<feature type="sequence variant" id="VAR_061267" description="In dbSNP:rs1450355." evidence="4">
    <original>L</original>
    <variation>P</variation>
    <location>
        <position position="422"/>
    </location>
</feature>
<feature type="sequence variant" id="VAR_055957" description="In dbSNP:rs1126960.">
    <original>Q</original>
    <variation>H</variation>
    <location>
        <position position="479"/>
    </location>
</feature>
<feature type="sequence conflict" description="In Ref. 1; AAQ16549." evidence="5" ref="1">
    <original>G</original>
    <variation>C</variation>
    <location>
        <position position="222"/>
    </location>
</feature>
<proteinExistence type="evidence at protein level"/>
<dbReference type="EMBL" id="AY335942">
    <property type="protein sequence ID" value="AAQ16548.1"/>
    <property type="molecule type" value="Genomic_DNA"/>
</dbReference>
<dbReference type="EMBL" id="AY335943">
    <property type="protein sequence ID" value="AAQ16549.1"/>
    <property type="molecule type" value="mRNA"/>
</dbReference>
<dbReference type="EMBL" id="BC023667">
    <property type="protein sequence ID" value="AAH23667.1"/>
    <property type="molecule type" value="mRNA"/>
</dbReference>
<dbReference type="EMBL" id="U90308">
    <property type="protein sequence ID" value="AAB50006.1"/>
    <property type="molecule type" value="mRNA"/>
</dbReference>
<dbReference type="CCDS" id="CCDS10750.1"/>
<dbReference type="RefSeq" id="NP_077312.2">
    <property type="nucleotide sequence ID" value="NM_024336.3"/>
</dbReference>
<dbReference type="SMR" id="P78415"/>
<dbReference type="BioGRID" id="122603">
    <property type="interactions" value="2"/>
</dbReference>
<dbReference type="DIP" id="DIP-62120N"/>
<dbReference type="FunCoup" id="P78415">
    <property type="interactions" value="631"/>
</dbReference>
<dbReference type="IntAct" id="P78415">
    <property type="interactions" value="1"/>
</dbReference>
<dbReference type="STRING" id="9606.ENSP00000331608"/>
<dbReference type="iPTMnet" id="P78415"/>
<dbReference type="PhosphoSitePlus" id="P78415"/>
<dbReference type="BioMuta" id="IRX3"/>
<dbReference type="DMDM" id="47117874"/>
<dbReference type="jPOST" id="P78415"/>
<dbReference type="MassIVE" id="P78415"/>
<dbReference type="PaxDb" id="9606-ENSP00000331608"/>
<dbReference type="PeptideAtlas" id="P78415"/>
<dbReference type="ProteomicsDB" id="57620"/>
<dbReference type="Antibodypedia" id="14619">
    <property type="antibodies" value="360 antibodies from 30 providers"/>
</dbReference>
<dbReference type="DNASU" id="79191"/>
<dbReference type="Ensembl" id="ENST00000329734.4">
    <property type="protein sequence ID" value="ENSP00000331608.3"/>
    <property type="gene ID" value="ENSG00000177508.12"/>
</dbReference>
<dbReference type="GeneID" id="79191"/>
<dbReference type="KEGG" id="hsa:79191"/>
<dbReference type="MANE-Select" id="ENST00000329734.4">
    <property type="protein sequence ID" value="ENSP00000331608.3"/>
    <property type="RefSeq nucleotide sequence ID" value="NM_024336.3"/>
    <property type="RefSeq protein sequence ID" value="NP_077312.2"/>
</dbReference>
<dbReference type="UCSC" id="uc002eht.2">
    <property type="organism name" value="human"/>
</dbReference>
<dbReference type="AGR" id="HGNC:14360"/>
<dbReference type="CTD" id="79191"/>
<dbReference type="DisGeNET" id="79191"/>
<dbReference type="GeneCards" id="IRX3"/>
<dbReference type="HGNC" id="HGNC:14360">
    <property type="gene designation" value="IRX3"/>
</dbReference>
<dbReference type="HPA" id="ENSG00000177508">
    <property type="expression patterns" value="Tissue enhanced (skin)"/>
</dbReference>
<dbReference type="MIM" id="612985">
    <property type="type" value="gene"/>
</dbReference>
<dbReference type="neXtProt" id="NX_P78415"/>
<dbReference type="OpenTargets" id="ENSG00000177508"/>
<dbReference type="PharmGKB" id="PA29926"/>
<dbReference type="VEuPathDB" id="HostDB:ENSG00000177508"/>
<dbReference type="eggNOG" id="KOG0773">
    <property type="taxonomic scope" value="Eukaryota"/>
</dbReference>
<dbReference type="GeneTree" id="ENSGT00940000161299"/>
<dbReference type="HOGENOM" id="CLU_042927_0_1_1"/>
<dbReference type="InParanoid" id="P78415"/>
<dbReference type="OMA" id="NQKPKIW"/>
<dbReference type="OrthoDB" id="5399138at2759"/>
<dbReference type="PAN-GO" id="P78415">
    <property type="GO annotations" value="6 GO annotations based on evolutionary models"/>
</dbReference>
<dbReference type="PhylomeDB" id="P78415"/>
<dbReference type="TreeFam" id="TF319371"/>
<dbReference type="PathwayCommons" id="P78415"/>
<dbReference type="SignaLink" id="P78415"/>
<dbReference type="SIGNOR" id="P78415"/>
<dbReference type="BioGRID-ORCS" id="79191">
    <property type="hits" value="35 hits in 1181 CRISPR screens"/>
</dbReference>
<dbReference type="ChiTaRS" id="IRX3">
    <property type="organism name" value="human"/>
</dbReference>
<dbReference type="GeneWiki" id="IRX3"/>
<dbReference type="GenomeRNAi" id="79191"/>
<dbReference type="Pharos" id="P78415">
    <property type="development level" value="Tbio"/>
</dbReference>
<dbReference type="PRO" id="PR:P78415"/>
<dbReference type="Proteomes" id="UP000005640">
    <property type="component" value="Chromosome 16"/>
</dbReference>
<dbReference type="RNAct" id="P78415">
    <property type="molecule type" value="protein"/>
</dbReference>
<dbReference type="Bgee" id="ENSG00000177508">
    <property type="expression patterns" value="Expressed in nipple and 163 other cell types or tissues"/>
</dbReference>
<dbReference type="ExpressionAtlas" id="P78415">
    <property type="expression patterns" value="baseline and differential"/>
</dbReference>
<dbReference type="GO" id="GO:0030424">
    <property type="term" value="C:axon"/>
    <property type="evidence" value="ECO:0007669"/>
    <property type="project" value="Ensembl"/>
</dbReference>
<dbReference type="GO" id="GO:0000785">
    <property type="term" value="C:chromatin"/>
    <property type="evidence" value="ECO:0000247"/>
    <property type="project" value="NTNU_SB"/>
</dbReference>
<dbReference type="GO" id="GO:0005737">
    <property type="term" value="C:cytoplasm"/>
    <property type="evidence" value="ECO:0007669"/>
    <property type="project" value="Ensembl"/>
</dbReference>
<dbReference type="GO" id="GO:0005634">
    <property type="term" value="C:nucleus"/>
    <property type="evidence" value="ECO:0000318"/>
    <property type="project" value="GO_Central"/>
</dbReference>
<dbReference type="GO" id="GO:0001228">
    <property type="term" value="F:DNA-binding transcription activator activity, RNA polymerase II-specific"/>
    <property type="evidence" value="ECO:0000250"/>
    <property type="project" value="BHF-UCL"/>
</dbReference>
<dbReference type="GO" id="GO:0000981">
    <property type="term" value="F:DNA-binding transcription factor activity, RNA polymerase II-specific"/>
    <property type="evidence" value="ECO:0000247"/>
    <property type="project" value="NTNU_SB"/>
</dbReference>
<dbReference type="GO" id="GO:0001227">
    <property type="term" value="F:DNA-binding transcription repressor activity, RNA polymerase II-specific"/>
    <property type="evidence" value="ECO:0000250"/>
    <property type="project" value="BHF-UCL"/>
</dbReference>
<dbReference type="GO" id="GO:0000978">
    <property type="term" value="F:RNA polymerase II cis-regulatory region sequence-specific DNA binding"/>
    <property type="evidence" value="ECO:0000250"/>
    <property type="project" value="BHF-UCL"/>
</dbReference>
<dbReference type="GO" id="GO:1990837">
    <property type="term" value="F:sequence-specific double-stranded DNA binding"/>
    <property type="evidence" value="ECO:0000314"/>
    <property type="project" value="ARUK-UCL"/>
</dbReference>
<dbReference type="GO" id="GO:0003167">
    <property type="term" value="P:atrioventricular bundle cell differentiation"/>
    <property type="evidence" value="ECO:0000250"/>
    <property type="project" value="BHF-UCL"/>
</dbReference>
<dbReference type="GO" id="GO:0048468">
    <property type="term" value="P:cell development"/>
    <property type="evidence" value="ECO:0000318"/>
    <property type="project" value="GO_Central"/>
</dbReference>
<dbReference type="GO" id="GO:0097009">
    <property type="term" value="P:energy homeostasis"/>
    <property type="evidence" value="ECO:0000250"/>
    <property type="project" value="UniProtKB"/>
</dbReference>
<dbReference type="GO" id="GO:0060932">
    <property type="term" value="P:His-Purkinje system cell differentiation"/>
    <property type="evidence" value="ECO:0000250"/>
    <property type="project" value="BHF-UCL"/>
</dbReference>
<dbReference type="GO" id="GO:0007498">
    <property type="term" value="P:mesoderm development"/>
    <property type="evidence" value="ECO:0007669"/>
    <property type="project" value="Ensembl"/>
</dbReference>
<dbReference type="GO" id="GO:0001656">
    <property type="term" value="P:metanephros development"/>
    <property type="evidence" value="ECO:0007669"/>
    <property type="project" value="Ensembl"/>
</dbReference>
<dbReference type="GO" id="GO:0045665">
    <property type="term" value="P:negative regulation of neuron differentiation"/>
    <property type="evidence" value="ECO:0007669"/>
    <property type="project" value="Ensembl"/>
</dbReference>
<dbReference type="GO" id="GO:0000122">
    <property type="term" value="P:negative regulation of transcription by RNA polymerase II"/>
    <property type="evidence" value="ECO:0000250"/>
    <property type="project" value="BHF-UCL"/>
</dbReference>
<dbReference type="GO" id="GO:0030182">
    <property type="term" value="P:neuron differentiation"/>
    <property type="evidence" value="ECO:0000318"/>
    <property type="project" value="GO_Central"/>
</dbReference>
<dbReference type="GO" id="GO:1903598">
    <property type="term" value="P:positive regulation of gap junction assembly"/>
    <property type="evidence" value="ECO:0000250"/>
    <property type="project" value="BHF-UCL"/>
</dbReference>
<dbReference type="GO" id="GO:0045666">
    <property type="term" value="P:positive regulation of neuron differentiation"/>
    <property type="evidence" value="ECO:0007669"/>
    <property type="project" value="Ensembl"/>
</dbReference>
<dbReference type="GO" id="GO:0045944">
    <property type="term" value="P:positive regulation of transcription by RNA polymerase II"/>
    <property type="evidence" value="ECO:0000250"/>
    <property type="project" value="BHF-UCL"/>
</dbReference>
<dbReference type="GO" id="GO:0003165">
    <property type="term" value="P:Purkinje myocyte development"/>
    <property type="evidence" value="ECO:0000250"/>
    <property type="project" value="BHF-UCL"/>
</dbReference>
<dbReference type="GO" id="GO:1901844">
    <property type="term" value="P:regulation of cell communication by electrical coupling involved in cardiac conduction"/>
    <property type="evidence" value="ECO:0000250"/>
    <property type="project" value="BHF-UCL"/>
</dbReference>
<dbReference type="GO" id="GO:0006357">
    <property type="term" value="P:regulation of transcription by RNA polymerase II"/>
    <property type="evidence" value="ECO:0000318"/>
    <property type="project" value="GO_Central"/>
</dbReference>
<dbReference type="GO" id="GO:0072086">
    <property type="term" value="P:specification of loop of Henle identity"/>
    <property type="evidence" value="ECO:0007669"/>
    <property type="project" value="Ensembl"/>
</dbReference>
<dbReference type="CDD" id="cd00086">
    <property type="entry name" value="homeodomain"/>
    <property type="match status" value="1"/>
</dbReference>
<dbReference type="FunFam" id="1.10.10.60:FF:000003">
    <property type="entry name" value="Iroquois-class homeobox protein IRX"/>
    <property type="match status" value="1"/>
</dbReference>
<dbReference type="Gene3D" id="1.10.10.60">
    <property type="entry name" value="Homeodomain-like"/>
    <property type="match status" value="1"/>
</dbReference>
<dbReference type="InterPro" id="IPR001356">
    <property type="entry name" value="HD"/>
</dbReference>
<dbReference type="InterPro" id="IPR017970">
    <property type="entry name" value="Homeobox_CS"/>
</dbReference>
<dbReference type="InterPro" id="IPR009057">
    <property type="entry name" value="Homeodomain-like_sf"/>
</dbReference>
<dbReference type="InterPro" id="IPR003893">
    <property type="entry name" value="Iroquois_homeo"/>
</dbReference>
<dbReference type="InterPro" id="IPR008422">
    <property type="entry name" value="KN_HD"/>
</dbReference>
<dbReference type="PANTHER" id="PTHR11211">
    <property type="entry name" value="IROQUOIS-CLASS HOMEODOMAIN PROTEIN IRX"/>
    <property type="match status" value="1"/>
</dbReference>
<dbReference type="PANTHER" id="PTHR11211:SF14">
    <property type="entry name" value="IROQUOIS-CLASS HOMEODOMAIN PROTEIN IRX-3"/>
    <property type="match status" value="1"/>
</dbReference>
<dbReference type="Pfam" id="PF05920">
    <property type="entry name" value="Homeobox_KN"/>
    <property type="match status" value="1"/>
</dbReference>
<dbReference type="SMART" id="SM00389">
    <property type="entry name" value="HOX"/>
    <property type="match status" value="1"/>
</dbReference>
<dbReference type="SMART" id="SM00548">
    <property type="entry name" value="IRO"/>
    <property type="match status" value="1"/>
</dbReference>
<dbReference type="SUPFAM" id="SSF46689">
    <property type="entry name" value="Homeodomain-like"/>
    <property type="match status" value="1"/>
</dbReference>
<dbReference type="PROSITE" id="PS00027">
    <property type="entry name" value="HOMEOBOX_1"/>
    <property type="match status" value="1"/>
</dbReference>
<dbReference type="PROSITE" id="PS50071">
    <property type="entry name" value="HOMEOBOX_2"/>
    <property type="match status" value="1"/>
</dbReference>
<evidence type="ECO:0000250" key="1">
    <source>
        <dbReference type="UniProtKB" id="P81067"/>
    </source>
</evidence>
<evidence type="ECO:0000255" key="2">
    <source>
        <dbReference type="PROSITE-ProRule" id="PRU00108"/>
    </source>
</evidence>
<evidence type="ECO:0000256" key="3">
    <source>
        <dbReference type="SAM" id="MobiDB-lite"/>
    </source>
</evidence>
<evidence type="ECO:0000269" key="4">
    <source>
    </source>
</evidence>
<evidence type="ECO:0000305" key="5"/>
<reference key="1">
    <citation type="submission" date="2003-07" db="EMBL/GenBank/DDBJ databases">
        <title>Characterization of the human homeobox two-cluster Iroquois gene family.</title>
        <authorList>
            <person name="Hansen L."/>
            <person name="Wu Q."/>
            <person name="Tommerup N."/>
        </authorList>
    </citation>
    <scope>NUCLEOTIDE SEQUENCE [GENOMIC DNA / MRNA]</scope>
</reference>
<reference key="2">
    <citation type="journal article" date="2004" name="Genome Res.">
        <title>The status, quality, and expansion of the NIH full-length cDNA project: the Mammalian Gene Collection (MGC).</title>
        <authorList>
            <consortium name="The MGC Project Team"/>
        </authorList>
    </citation>
    <scope>NUCLEOTIDE SEQUENCE [LARGE SCALE MRNA]</scope>
    <scope>VARIANT PRO-422</scope>
    <source>
        <tissue>Muscle</tissue>
    </source>
</reference>
<reference key="3">
    <citation type="submission" date="1997-03" db="EMBL/GenBank/DDBJ databases">
        <title>IRX: a new family of human homeobox genes from the breast.</title>
        <authorList>
            <person name="Lewis M.T."/>
            <person name="Strickland P.A."/>
            <person name="Ross S."/>
            <person name="Snyder C.J."/>
            <person name="Daniel C.W."/>
        </authorList>
    </citation>
    <scope>NUCLEOTIDE SEQUENCE [MRNA] OF 91-176</scope>
</reference>
<comment type="function">
    <text evidence="1">Transcription factor involved in SHH-dependent neural patterning. Together with NKX2-2 and NKX6-1 acts to restrict the generation of motor neurons to the appropriate region of the neural tube. Belongs to the class I proteins of neuronal progenitor factors, which are repressed by SHH signals. Involved in the transcriptional repression of MNX1 in non-motor neuron cells. Acts as a regulator of energy metabolism.</text>
</comment>
<comment type="subcellular location">
    <subcellularLocation>
        <location evidence="5">Nucleus</location>
    </subcellularLocation>
</comment>
<comment type="similarity">
    <text evidence="5">Belongs to the TALE/IRO homeobox family.</text>
</comment>
<name>IRX3_HUMAN</name>
<organism>
    <name type="scientific">Homo sapiens</name>
    <name type="common">Human</name>
    <dbReference type="NCBI Taxonomy" id="9606"/>
    <lineage>
        <taxon>Eukaryota</taxon>
        <taxon>Metazoa</taxon>
        <taxon>Chordata</taxon>
        <taxon>Craniata</taxon>
        <taxon>Vertebrata</taxon>
        <taxon>Euteleostomi</taxon>
        <taxon>Mammalia</taxon>
        <taxon>Eutheria</taxon>
        <taxon>Euarchontoglires</taxon>
        <taxon>Primates</taxon>
        <taxon>Haplorrhini</taxon>
        <taxon>Catarrhini</taxon>
        <taxon>Hominidae</taxon>
        <taxon>Homo</taxon>
    </lineage>
</organism>
<protein>
    <recommendedName>
        <fullName>Iroquois-class homeodomain protein IRX-3</fullName>
    </recommendedName>
    <alternativeName>
        <fullName>Homeodomain protein IRXB1</fullName>
    </alternativeName>
    <alternativeName>
        <fullName>Iroquois homeobox protein 3</fullName>
    </alternativeName>
</protein>
<gene>
    <name type="primary">IRX3</name>
    <name type="synonym">IRXB1</name>
</gene>
<accession>P78415</accession>
<accession>Q7Z4A4</accession>
<accession>Q7Z4A5</accession>
<accession>Q8IVC6</accession>
<keyword id="KW-0217">Developmental protein</keyword>
<keyword id="KW-0238">DNA-binding</keyword>
<keyword id="KW-0371">Homeobox</keyword>
<keyword id="KW-0539">Nucleus</keyword>
<keyword id="KW-0597">Phosphoprotein</keyword>
<keyword id="KW-1267">Proteomics identification</keyword>
<keyword id="KW-1185">Reference proteome</keyword>
<keyword id="KW-0678">Repressor</keyword>
<keyword id="KW-0804">Transcription</keyword>
<keyword id="KW-0805">Transcription regulation</keyword>